<sequence>MGIWQGQSRRKATGGKYKIVVKKHKKEMGRESAETHLTDDTKIKIVRVAGGNKKVKLLRTNYANVMDPKTNTCKKVSISNVVGNDANKHYIRRNIITKGAIIETEMGKAKVTSRPGQSGIVNAILINE</sequence>
<accession>A6UWP2</accession>
<protein>
    <recommendedName>
        <fullName evidence="1">Small ribosomal subunit protein eS8</fullName>
    </recommendedName>
    <alternativeName>
        <fullName evidence="2">30S ribosomal protein S8e</fullName>
    </alternativeName>
</protein>
<name>RS8E_META3</name>
<organism>
    <name type="scientific">Methanococcus aeolicus (strain ATCC BAA-1280 / DSM 17508 / OCM 812 / Nankai-3)</name>
    <dbReference type="NCBI Taxonomy" id="419665"/>
    <lineage>
        <taxon>Archaea</taxon>
        <taxon>Methanobacteriati</taxon>
        <taxon>Methanobacteriota</taxon>
        <taxon>Methanomada group</taxon>
        <taxon>Methanococci</taxon>
        <taxon>Methanococcales</taxon>
        <taxon>Methanococcaceae</taxon>
        <taxon>Methanococcus</taxon>
    </lineage>
</organism>
<comment type="subunit">
    <text evidence="1">Part of the 30S ribosomal subunit.</text>
</comment>
<comment type="similarity">
    <text evidence="1">Belongs to the eukaryotic ribosomal protein eS8 family.</text>
</comment>
<reference key="1">
    <citation type="submission" date="2007-06" db="EMBL/GenBank/DDBJ databases">
        <title>Complete sequence of Methanococcus aeolicus Nankai-3.</title>
        <authorList>
            <consortium name="US DOE Joint Genome Institute"/>
            <person name="Copeland A."/>
            <person name="Lucas S."/>
            <person name="Lapidus A."/>
            <person name="Barry K."/>
            <person name="Glavina del Rio T."/>
            <person name="Dalin E."/>
            <person name="Tice H."/>
            <person name="Pitluck S."/>
            <person name="Chain P."/>
            <person name="Malfatti S."/>
            <person name="Shin M."/>
            <person name="Vergez L."/>
            <person name="Schmutz J."/>
            <person name="Larimer F."/>
            <person name="Land M."/>
            <person name="Hauser L."/>
            <person name="Kyrpides N."/>
            <person name="Lykidis A."/>
            <person name="Sieprawska-Lupa M."/>
            <person name="Whitman W.B."/>
            <person name="Richardson P."/>
        </authorList>
    </citation>
    <scope>NUCLEOTIDE SEQUENCE [LARGE SCALE GENOMIC DNA]</scope>
    <source>
        <strain>ATCC BAA-1280 / DSM 17508 / OCM 812 / Nankai-3</strain>
    </source>
</reference>
<gene>
    <name evidence="1" type="primary">rps8e</name>
    <name type="ordered locus">Maeo_1338</name>
</gene>
<dbReference type="EMBL" id="CP000743">
    <property type="protein sequence ID" value="ABR56914.1"/>
    <property type="molecule type" value="Genomic_DNA"/>
</dbReference>
<dbReference type="RefSeq" id="WP_011974046.1">
    <property type="nucleotide sequence ID" value="NC_009635.1"/>
</dbReference>
<dbReference type="SMR" id="A6UWP2"/>
<dbReference type="STRING" id="419665.Maeo_1338"/>
<dbReference type="GeneID" id="5326666"/>
<dbReference type="KEGG" id="mae:Maeo_1338"/>
<dbReference type="eggNOG" id="arCOG04154">
    <property type="taxonomic scope" value="Archaea"/>
</dbReference>
<dbReference type="HOGENOM" id="CLU_080597_2_1_2"/>
<dbReference type="OrthoDB" id="372305at2157"/>
<dbReference type="Proteomes" id="UP000001106">
    <property type="component" value="Chromosome"/>
</dbReference>
<dbReference type="GO" id="GO:1990904">
    <property type="term" value="C:ribonucleoprotein complex"/>
    <property type="evidence" value="ECO:0007669"/>
    <property type="project" value="UniProtKB-KW"/>
</dbReference>
<dbReference type="GO" id="GO:0005840">
    <property type="term" value="C:ribosome"/>
    <property type="evidence" value="ECO:0007669"/>
    <property type="project" value="UniProtKB-KW"/>
</dbReference>
<dbReference type="GO" id="GO:0003735">
    <property type="term" value="F:structural constituent of ribosome"/>
    <property type="evidence" value="ECO:0007669"/>
    <property type="project" value="InterPro"/>
</dbReference>
<dbReference type="GO" id="GO:0006412">
    <property type="term" value="P:translation"/>
    <property type="evidence" value="ECO:0007669"/>
    <property type="project" value="UniProtKB-UniRule"/>
</dbReference>
<dbReference type="CDD" id="cd11382">
    <property type="entry name" value="Ribosomal_S8e"/>
    <property type="match status" value="1"/>
</dbReference>
<dbReference type="FunFam" id="2.40.10.310:FF:000002">
    <property type="entry name" value="30S ribosomal protein S8e"/>
    <property type="match status" value="1"/>
</dbReference>
<dbReference type="Gene3D" id="2.40.10.310">
    <property type="match status" value="1"/>
</dbReference>
<dbReference type="HAMAP" id="MF_00029">
    <property type="entry name" value="Ribosomal_eS8"/>
    <property type="match status" value="1"/>
</dbReference>
<dbReference type="InterPro" id="IPR001047">
    <property type="entry name" value="Ribosomal_eS8"/>
</dbReference>
<dbReference type="InterPro" id="IPR020919">
    <property type="entry name" value="Ribosomal_protein_eS8_arc"/>
</dbReference>
<dbReference type="InterPro" id="IPR022309">
    <property type="entry name" value="Ribosomal_Se8/biogenesis_NSA2"/>
</dbReference>
<dbReference type="NCBIfam" id="TIGR00307">
    <property type="entry name" value="eS8"/>
    <property type="match status" value="1"/>
</dbReference>
<dbReference type="PANTHER" id="PTHR10394">
    <property type="entry name" value="40S RIBOSOMAL PROTEIN S8"/>
    <property type="match status" value="1"/>
</dbReference>
<dbReference type="Pfam" id="PF01201">
    <property type="entry name" value="Ribosomal_S8e"/>
    <property type="match status" value="1"/>
</dbReference>
<evidence type="ECO:0000255" key="1">
    <source>
        <dbReference type="HAMAP-Rule" id="MF_00029"/>
    </source>
</evidence>
<evidence type="ECO:0000305" key="2"/>
<keyword id="KW-0687">Ribonucleoprotein</keyword>
<keyword id="KW-0689">Ribosomal protein</keyword>
<proteinExistence type="inferred from homology"/>
<feature type="chain" id="PRO_1000002339" description="Small ribosomal subunit protein eS8">
    <location>
        <begin position="1"/>
        <end position="128"/>
    </location>
</feature>